<protein>
    <recommendedName>
        <fullName evidence="1">3-isopropylmalate dehydratase large subunit</fullName>
        <ecNumber evidence="1">4.2.1.33</ecNumber>
    </recommendedName>
    <alternativeName>
        <fullName evidence="1">Alpha-IPM isomerase</fullName>
        <shortName evidence="1">IPMI</shortName>
    </alternativeName>
    <alternativeName>
        <fullName evidence="1">Isopropylmalate isomerase</fullName>
    </alternativeName>
</protein>
<gene>
    <name evidence="1" type="primary">leuC</name>
    <name type="ordered locus">Oant_0947</name>
</gene>
<sequence length="469" mass="50985">MSAPRTLYDKIWDDHVVDQQEDGTCLLYIDRHLVHEVTSPQAFEGLRMAGRKVRHPEKTLAVVDHNVPTSPDRINGIKNEESRIQVEALAKNAADFNVEYYSERDRRQGVVHIVGPEQGFTLPGMTIVCGDSHTSTHGAFGSLAHGIGTSEVEHVLATQTLIQKKAKNMLVRVEGELAPGVTAKDITLAIIGEIGTAGGTGYVIEYAGSAIRSLSMEGRMTVCNMSIEGGARAGLIAPDETTFAYVQDKPRAPKGEALEQAISYWKTLHSDEGAHFDKIVELDAAKISPVVSWGSSPEDVVFVTDIVPNPDEIKDETKRASKWRALDYMGLKPGTKMTDIKIDRVFIGSCTNGRIEDLRDAARMAAGKKVAAGVNAMIVPGSGLVKEQAEAEGLDKIFIEAGFDWREPGCSMCLAMNDDRLKPGERCASTSNRNFEGRQGFKGRTHLVSPAMAAAAAIAGHFVDIREWN</sequence>
<name>LEUC_BRUA4</name>
<reference key="1">
    <citation type="journal article" date="2011" name="J. Bacteriol.">
        <title>Genome of Ochrobactrum anthropi ATCC 49188 T, a versatile opportunistic pathogen and symbiont of several eukaryotic hosts.</title>
        <authorList>
            <person name="Chain P.S."/>
            <person name="Lang D.M."/>
            <person name="Comerci D.J."/>
            <person name="Malfatti S.A."/>
            <person name="Vergez L.M."/>
            <person name="Shin M."/>
            <person name="Ugalde R.A."/>
            <person name="Garcia E."/>
            <person name="Tolmasky M.E."/>
        </authorList>
    </citation>
    <scope>NUCLEOTIDE SEQUENCE [LARGE SCALE GENOMIC DNA]</scope>
    <source>
        <strain>ATCC 49188 / DSM 6882 / CCUG 24695 / JCM 21032 / LMG 3331 / NBRC 15819 / NCTC 12168 / Alc 37</strain>
    </source>
</reference>
<evidence type="ECO:0000255" key="1">
    <source>
        <dbReference type="HAMAP-Rule" id="MF_01026"/>
    </source>
</evidence>
<comment type="function">
    <text evidence="1">Catalyzes the isomerization between 2-isopropylmalate and 3-isopropylmalate, via the formation of 2-isopropylmaleate.</text>
</comment>
<comment type="catalytic activity">
    <reaction evidence="1">
        <text>(2R,3S)-3-isopropylmalate = (2S)-2-isopropylmalate</text>
        <dbReference type="Rhea" id="RHEA:32287"/>
        <dbReference type="ChEBI" id="CHEBI:1178"/>
        <dbReference type="ChEBI" id="CHEBI:35121"/>
        <dbReference type="EC" id="4.2.1.33"/>
    </reaction>
</comment>
<comment type="cofactor">
    <cofactor evidence="1">
        <name>[4Fe-4S] cluster</name>
        <dbReference type="ChEBI" id="CHEBI:49883"/>
    </cofactor>
    <text evidence="1">Binds 1 [4Fe-4S] cluster per subunit.</text>
</comment>
<comment type="pathway">
    <text evidence="1">Amino-acid biosynthesis; L-leucine biosynthesis; L-leucine from 3-methyl-2-oxobutanoate: step 2/4.</text>
</comment>
<comment type="subunit">
    <text evidence="1">Heterodimer of LeuC and LeuD.</text>
</comment>
<comment type="similarity">
    <text evidence="1">Belongs to the aconitase/IPM isomerase family. LeuC type 1 subfamily.</text>
</comment>
<proteinExistence type="inferred from homology"/>
<dbReference type="EC" id="4.2.1.33" evidence="1"/>
<dbReference type="EMBL" id="CP000758">
    <property type="protein sequence ID" value="ABS13668.1"/>
    <property type="molecule type" value="Genomic_DNA"/>
</dbReference>
<dbReference type="RefSeq" id="WP_010657579.1">
    <property type="nucleotide sequence ID" value="NC_009667.1"/>
</dbReference>
<dbReference type="SMR" id="A6WXG4"/>
<dbReference type="STRING" id="439375.Oant_0947"/>
<dbReference type="GeneID" id="61318625"/>
<dbReference type="KEGG" id="oan:Oant_0947"/>
<dbReference type="eggNOG" id="COG0065">
    <property type="taxonomic scope" value="Bacteria"/>
</dbReference>
<dbReference type="HOGENOM" id="CLU_006714_3_4_5"/>
<dbReference type="PhylomeDB" id="A6WXG4"/>
<dbReference type="UniPathway" id="UPA00048">
    <property type="reaction ID" value="UER00071"/>
</dbReference>
<dbReference type="Proteomes" id="UP000002301">
    <property type="component" value="Chromosome 1"/>
</dbReference>
<dbReference type="GO" id="GO:0003861">
    <property type="term" value="F:3-isopropylmalate dehydratase activity"/>
    <property type="evidence" value="ECO:0007669"/>
    <property type="project" value="UniProtKB-UniRule"/>
</dbReference>
<dbReference type="GO" id="GO:0051539">
    <property type="term" value="F:4 iron, 4 sulfur cluster binding"/>
    <property type="evidence" value="ECO:0007669"/>
    <property type="project" value="UniProtKB-KW"/>
</dbReference>
<dbReference type="GO" id="GO:0046872">
    <property type="term" value="F:metal ion binding"/>
    <property type="evidence" value="ECO:0007669"/>
    <property type="project" value="UniProtKB-KW"/>
</dbReference>
<dbReference type="GO" id="GO:0009098">
    <property type="term" value="P:L-leucine biosynthetic process"/>
    <property type="evidence" value="ECO:0007669"/>
    <property type="project" value="UniProtKB-UniRule"/>
</dbReference>
<dbReference type="CDD" id="cd01583">
    <property type="entry name" value="IPMI"/>
    <property type="match status" value="1"/>
</dbReference>
<dbReference type="FunFam" id="3.30.499.10:FF:000006">
    <property type="entry name" value="3-isopropylmalate dehydratase large subunit"/>
    <property type="match status" value="1"/>
</dbReference>
<dbReference type="FunFam" id="3.30.499.10:FF:000007">
    <property type="entry name" value="3-isopropylmalate dehydratase large subunit"/>
    <property type="match status" value="1"/>
</dbReference>
<dbReference type="Gene3D" id="3.30.499.10">
    <property type="entry name" value="Aconitase, domain 3"/>
    <property type="match status" value="2"/>
</dbReference>
<dbReference type="HAMAP" id="MF_01026">
    <property type="entry name" value="LeuC_type1"/>
    <property type="match status" value="1"/>
</dbReference>
<dbReference type="InterPro" id="IPR004430">
    <property type="entry name" value="3-IsopropMal_deHydase_lsu"/>
</dbReference>
<dbReference type="InterPro" id="IPR015931">
    <property type="entry name" value="Acnase/IPM_dHydase_lsu_aba_1/3"/>
</dbReference>
<dbReference type="InterPro" id="IPR001030">
    <property type="entry name" value="Acoase/IPM_deHydtase_lsu_aba"/>
</dbReference>
<dbReference type="InterPro" id="IPR018136">
    <property type="entry name" value="Aconitase_4Fe-4S_BS"/>
</dbReference>
<dbReference type="InterPro" id="IPR036008">
    <property type="entry name" value="Aconitase_4Fe-4S_dom"/>
</dbReference>
<dbReference type="InterPro" id="IPR050067">
    <property type="entry name" value="IPM_dehydratase_rel_enz"/>
</dbReference>
<dbReference type="InterPro" id="IPR033941">
    <property type="entry name" value="IPMI_cat"/>
</dbReference>
<dbReference type="NCBIfam" id="TIGR00170">
    <property type="entry name" value="leuC"/>
    <property type="match status" value="1"/>
</dbReference>
<dbReference type="NCBIfam" id="NF004016">
    <property type="entry name" value="PRK05478.1"/>
    <property type="match status" value="1"/>
</dbReference>
<dbReference type="NCBIfam" id="NF009116">
    <property type="entry name" value="PRK12466.1"/>
    <property type="match status" value="1"/>
</dbReference>
<dbReference type="PANTHER" id="PTHR43822:SF9">
    <property type="entry name" value="3-ISOPROPYLMALATE DEHYDRATASE"/>
    <property type="match status" value="1"/>
</dbReference>
<dbReference type="PANTHER" id="PTHR43822">
    <property type="entry name" value="HOMOACONITASE, MITOCHONDRIAL-RELATED"/>
    <property type="match status" value="1"/>
</dbReference>
<dbReference type="Pfam" id="PF00330">
    <property type="entry name" value="Aconitase"/>
    <property type="match status" value="1"/>
</dbReference>
<dbReference type="PRINTS" id="PR00415">
    <property type="entry name" value="ACONITASE"/>
</dbReference>
<dbReference type="SUPFAM" id="SSF53732">
    <property type="entry name" value="Aconitase iron-sulfur domain"/>
    <property type="match status" value="1"/>
</dbReference>
<dbReference type="PROSITE" id="PS00450">
    <property type="entry name" value="ACONITASE_1"/>
    <property type="match status" value="1"/>
</dbReference>
<dbReference type="PROSITE" id="PS01244">
    <property type="entry name" value="ACONITASE_2"/>
    <property type="match status" value="1"/>
</dbReference>
<keyword id="KW-0004">4Fe-4S</keyword>
<keyword id="KW-0028">Amino-acid biosynthesis</keyword>
<keyword id="KW-0100">Branched-chain amino acid biosynthesis</keyword>
<keyword id="KW-0408">Iron</keyword>
<keyword id="KW-0411">Iron-sulfur</keyword>
<keyword id="KW-0432">Leucine biosynthesis</keyword>
<keyword id="KW-0456">Lyase</keyword>
<keyword id="KW-0479">Metal-binding</keyword>
<keyword id="KW-1185">Reference proteome</keyword>
<accession>A6WXG4</accession>
<feature type="chain" id="PRO_1000063578" description="3-isopropylmalate dehydratase large subunit">
    <location>
        <begin position="1"/>
        <end position="469"/>
    </location>
</feature>
<feature type="binding site" evidence="1">
    <location>
        <position position="350"/>
    </location>
    <ligand>
        <name>[4Fe-4S] cluster</name>
        <dbReference type="ChEBI" id="CHEBI:49883"/>
    </ligand>
</feature>
<feature type="binding site" evidence="1">
    <location>
        <position position="410"/>
    </location>
    <ligand>
        <name>[4Fe-4S] cluster</name>
        <dbReference type="ChEBI" id="CHEBI:49883"/>
    </ligand>
</feature>
<feature type="binding site" evidence="1">
    <location>
        <position position="413"/>
    </location>
    <ligand>
        <name>[4Fe-4S] cluster</name>
        <dbReference type="ChEBI" id="CHEBI:49883"/>
    </ligand>
</feature>
<organism>
    <name type="scientific">Brucella anthropi (strain ATCC 49188 / DSM 6882 / CCUG 24695 / JCM 21032 / LMG 3331 / NBRC 15819 / NCTC 12168 / Alc 37)</name>
    <name type="common">Ochrobactrum anthropi</name>
    <dbReference type="NCBI Taxonomy" id="439375"/>
    <lineage>
        <taxon>Bacteria</taxon>
        <taxon>Pseudomonadati</taxon>
        <taxon>Pseudomonadota</taxon>
        <taxon>Alphaproteobacteria</taxon>
        <taxon>Hyphomicrobiales</taxon>
        <taxon>Brucellaceae</taxon>
        <taxon>Brucella/Ochrobactrum group</taxon>
        <taxon>Brucella</taxon>
    </lineage>
</organism>